<evidence type="ECO:0000255" key="1">
    <source>
        <dbReference type="HAMAP-Rule" id="MF_00675"/>
    </source>
</evidence>
<comment type="catalytic activity">
    <reaction evidence="1">
        <text>D-glucuronate = D-fructuronate</text>
        <dbReference type="Rhea" id="RHEA:13049"/>
        <dbReference type="ChEBI" id="CHEBI:58720"/>
        <dbReference type="ChEBI" id="CHEBI:59863"/>
        <dbReference type="EC" id="5.3.1.12"/>
    </reaction>
</comment>
<comment type="catalytic activity">
    <reaction evidence="1">
        <text>aldehydo-D-galacturonate = keto-D-tagaturonate</text>
        <dbReference type="Rhea" id="RHEA:27702"/>
        <dbReference type="ChEBI" id="CHEBI:12952"/>
        <dbReference type="ChEBI" id="CHEBI:17886"/>
        <dbReference type="EC" id="5.3.1.12"/>
    </reaction>
</comment>
<comment type="pathway">
    <text evidence="1">Carbohydrate metabolism; pentose and glucuronate interconversion.</text>
</comment>
<comment type="similarity">
    <text evidence="1">Belongs to the metallo-dependent hydrolases superfamily. Uronate isomerase family.</text>
</comment>
<organism>
    <name type="scientific">Escherichia coli (strain SMS-3-5 / SECEC)</name>
    <dbReference type="NCBI Taxonomy" id="439855"/>
    <lineage>
        <taxon>Bacteria</taxon>
        <taxon>Pseudomonadati</taxon>
        <taxon>Pseudomonadota</taxon>
        <taxon>Gammaproteobacteria</taxon>
        <taxon>Enterobacterales</taxon>
        <taxon>Enterobacteriaceae</taxon>
        <taxon>Escherichia</taxon>
    </lineage>
</organism>
<sequence>MTPFMTEDFLLDTEFARRLYHDYAKDQPIFDYHCHLPPQQIAEDYRFKNLYDIWLKGDHYKWRAMRTNGVAERLCTGDASDREKFDAWAATVPHTIGNPLYHWTHLELRRPFGITGKLLSPSTADEIWNECNELLAQDNFSARGIMQQMNVKMVGTTDDPIDSLEHHAEIAKDGSFTIKVLPSWRPDKAFNIEQATFNDYMAKLGEVSDTDIRRFADLQTALTKRLDHFAAHGCKVSDHALDVVMFAEANEAELDSILARRLAGETLSEHEVAQFKTAVLVFLGAEYARRGWVQQYHIGALRNNNLRQFKLLGPDVGFDSINDRPMAEELSKLLSKQNEENLLPKTILYCLNPRDNEVLGTMIGNFQGEGMPGKMQFGSGWWFNDQKDGMERQMTQLAQLGLLSRFVGMLTDSRSFLSYTRHEYFRRILCQMIGRWVEAGEAPADINLLGEMVKNICFNNARDYFAIELN</sequence>
<protein>
    <recommendedName>
        <fullName evidence="1">Uronate isomerase</fullName>
        <ecNumber evidence="1">5.3.1.12</ecNumber>
    </recommendedName>
    <alternativeName>
        <fullName evidence="1">Glucuronate isomerase</fullName>
    </alternativeName>
    <alternativeName>
        <fullName evidence="1">Uronic isomerase</fullName>
    </alternativeName>
</protein>
<dbReference type="EC" id="5.3.1.12" evidence="1"/>
<dbReference type="EMBL" id="CP000970">
    <property type="protein sequence ID" value="ACB19239.1"/>
    <property type="molecule type" value="Genomic_DNA"/>
</dbReference>
<dbReference type="RefSeq" id="WP_000187442.1">
    <property type="nucleotide sequence ID" value="NC_010498.1"/>
</dbReference>
<dbReference type="SMR" id="B1LFJ0"/>
<dbReference type="GeneID" id="93778895"/>
<dbReference type="KEGG" id="ecm:EcSMS35_3384"/>
<dbReference type="HOGENOM" id="CLU_044465_1_0_6"/>
<dbReference type="UniPathway" id="UPA00246"/>
<dbReference type="Proteomes" id="UP000007011">
    <property type="component" value="Chromosome"/>
</dbReference>
<dbReference type="GO" id="GO:0008880">
    <property type="term" value="F:glucuronate isomerase activity"/>
    <property type="evidence" value="ECO:0007669"/>
    <property type="project" value="UniProtKB-UniRule"/>
</dbReference>
<dbReference type="GO" id="GO:0019698">
    <property type="term" value="P:D-galacturonate catabolic process"/>
    <property type="evidence" value="ECO:0007669"/>
    <property type="project" value="TreeGrafter"/>
</dbReference>
<dbReference type="GO" id="GO:0042840">
    <property type="term" value="P:D-glucuronate catabolic process"/>
    <property type="evidence" value="ECO:0007669"/>
    <property type="project" value="TreeGrafter"/>
</dbReference>
<dbReference type="FunFam" id="1.10.2020.10:FF:000001">
    <property type="entry name" value="Uronate isomerase"/>
    <property type="match status" value="1"/>
</dbReference>
<dbReference type="Gene3D" id="3.20.20.140">
    <property type="entry name" value="Metal-dependent hydrolases"/>
    <property type="match status" value="1"/>
</dbReference>
<dbReference type="Gene3D" id="1.10.2020.10">
    <property type="entry name" value="uronate isomerase, domain 2, chain A"/>
    <property type="match status" value="1"/>
</dbReference>
<dbReference type="HAMAP" id="MF_00675">
    <property type="entry name" value="UxaC"/>
    <property type="match status" value="1"/>
</dbReference>
<dbReference type="InterPro" id="IPR032466">
    <property type="entry name" value="Metal_Hydrolase"/>
</dbReference>
<dbReference type="InterPro" id="IPR003766">
    <property type="entry name" value="Uronate_isomerase"/>
</dbReference>
<dbReference type="NCBIfam" id="NF002794">
    <property type="entry name" value="PRK02925.1"/>
    <property type="match status" value="1"/>
</dbReference>
<dbReference type="PANTHER" id="PTHR30068">
    <property type="entry name" value="URONATE ISOMERASE"/>
    <property type="match status" value="1"/>
</dbReference>
<dbReference type="PANTHER" id="PTHR30068:SF4">
    <property type="entry name" value="URONATE ISOMERASE"/>
    <property type="match status" value="1"/>
</dbReference>
<dbReference type="Pfam" id="PF02614">
    <property type="entry name" value="UxaC"/>
    <property type="match status" value="1"/>
</dbReference>
<dbReference type="SUPFAM" id="SSF51556">
    <property type="entry name" value="Metallo-dependent hydrolases"/>
    <property type="match status" value="1"/>
</dbReference>
<accession>B1LFJ0</accession>
<name>UXAC_ECOSM</name>
<proteinExistence type="inferred from homology"/>
<gene>
    <name evidence="1" type="primary">uxaC</name>
    <name type="ordered locus">EcSMS35_3384</name>
</gene>
<reference key="1">
    <citation type="journal article" date="2008" name="J. Bacteriol.">
        <title>Insights into the environmental resistance gene pool from the genome sequence of the multidrug-resistant environmental isolate Escherichia coli SMS-3-5.</title>
        <authorList>
            <person name="Fricke W.F."/>
            <person name="Wright M.S."/>
            <person name="Lindell A.H."/>
            <person name="Harkins D.M."/>
            <person name="Baker-Austin C."/>
            <person name="Ravel J."/>
            <person name="Stepanauskas R."/>
        </authorList>
    </citation>
    <scope>NUCLEOTIDE SEQUENCE [LARGE SCALE GENOMIC DNA]</scope>
    <source>
        <strain>SMS-3-5 / SECEC</strain>
    </source>
</reference>
<keyword id="KW-0413">Isomerase</keyword>
<feature type="chain" id="PRO_1000131595" description="Uronate isomerase">
    <location>
        <begin position="1"/>
        <end position="470"/>
    </location>
</feature>